<protein>
    <recommendedName>
        <fullName>Sorting nexin-29</fullName>
    </recommendedName>
</protein>
<keyword id="KW-0175">Coiled coil</keyword>
<keyword id="KW-0597">Phosphoprotein</keyword>
<keyword id="KW-1185">Reference proteome</keyword>
<proteinExistence type="evidence at transcript level"/>
<comment type="similarity">
    <text evidence="7">Belongs to the sorting nexin family.</text>
</comment>
<name>SNX29_BOVIN</name>
<evidence type="ECO:0000250" key="1">
    <source>
        <dbReference type="UniProtKB" id="Q8TEQ0"/>
    </source>
</evidence>
<evidence type="ECO:0000250" key="2">
    <source>
        <dbReference type="UniProtKB" id="Q9D3S3"/>
    </source>
</evidence>
<evidence type="ECO:0000255" key="3"/>
<evidence type="ECO:0000255" key="4">
    <source>
        <dbReference type="PROSITE-ProRule" id="PRU00147"/>
    </source>
</evidence>
<evidence type="ECO:0000255" key="5">
    <source>
        <dbReference type="PROSITE-ProRule" id="PRU00178"/>
    </source>
</evidence>
<evidence type="ECO:0000256" key="6">
    <source>
        <dbReference type="SAM" id="MobiDB-lite"/>
    </source>
</evidence>
<evidence type="ECO:0000305" key="7"/>
<feature type="chain" id="PRO_0000413687" description="Sorting nexin-29">
    <location>
        <begin position="1"/>
        <end position="817"/>
    </location>
</feature>
<feature type="domain" description="RUN" evidence="5">
    <location>
        <begin position="37"/>
        <end position="181"/>
    </location>
</feature>
<feature type="domain" description="PX" evidence="4">
    <location>
        <begin position="658"/>
        <end position="781"/>
    </location>
</feature>
<feature type="region of interest" description="Disordered" evidence="6">
    <location>
        <begin position="271"/>
        <end position="299"/>
    </location>
</feature>
<feature type="region of interest" description="Disordered" evidence="6">
    <location>
        <begin position="344"/>
        <end position="381"/>
    </location>
</feature>
<feature type="region of interest" description="Disordered" evidence="6">
    <location>
        <begin position="417"/>
        <end position="460"/>
    </location>
</feature>
<feature type="region of interest" description="Disordered" evidence="6">
    <location>
        <begin position="784"/>
        <end position="817"/>
    </location>
</feature>
<feature type="coiled-coil region" evidence="3">
    <location>
        <begin position="466"/>
        <end position="546"/>
    </location>
</feature>
<feature type="compositionally biased region" description="Acidic residues" evidence="6">
    <location>
        <begin position="347"/>
        <end position="358"/>
    </location>
</feature>
<feature type="compositionally biased region" description="Basic and acidic residues" evidence="6">
    <location>
        <begin position="369"/>
        <end position="378"/>
    </location>
</feature>
<feature type="compositionally biased region" description="Low complexity" evidence="6">
    <location>
        <begin position="445"/>
        <end position="460"/>
    </location>
</feature>
<feature type="modified residue" description="Phosphoserine" evidence="1">
    <location>
        <position position="269"/>
    </location>
</feature>
<feature type="modified residue" description="Phosphoserine" evidence="2">
    <location>
        <position position="292"/>
    </location>
</feature>
<feature type="modified residue" description="Phosphoserine" evidence="2">
    <location>
        <position position="293"/>
    </location>
</feature>
<feature type="modified residue" description="Phosphoserine" evidence="1">
    <location>
        <position position="331"/>
    </location>
</feature>
<feature type="modified residue" description="Phosphoserine" evidence="2">
    <location>
        <position position="345"/>
    </location>
</feature>
<feature type="modified residue" description="Phosphoserine" evidence="2">
    <location>
        <position position="451"/>
    </location>
</feature>
<feature type="modified residue" description="Phosphoserine" evidence="2">
    <location>
        <position position="641"/>
    </location>
</feature>
<feature type="modified residue" description="Phosphothreonine" evidence="2">
    <location>
        <position position="643"/>
    </location>
</feature>
<feature type="modified residue" description="Phosphoserine" evidence="2">
    <location>
        <position position="644"/>
    </location>
</feature>
<feature type="modified residue" description="Phosphoserine" evidence="2">
    <location>
        <position position="648"/>
    </location>
</feature>
<dbReference type="EMBL" id="BC123533">
    <property type="protein sequence ID" value="AAI23534.1"/>
    <property type="molecule type" value="mRNA"/>
</dbReference>
<dbReference type="RefSeq" id="NP_001070330.1">
    <property type="nucleotide sequence ID" value="NM_001076862.1"/>
</dbReference>
<dbReference type="RefSeq" id="XP_010817564.1">
    <property type="nucleotide sequence ID" value="XM_010819262.2"/>
</dbReference>
<dbReference type="RefSeq" id="XP_015324795.1">
    <property type="nucleotide sequence ID" value="XM_015469309.1"/>
</dbReference>
<dbReference type="SMR" id="Q08DX0"/>
<dbReference type="FunCoup" id="Q08DX0">
    <property type="interactions" value="2388"/>
</dbReference>
<dbReference type="STRING" id="9913.ENSBTAP00000062382"/>
<dbReference type="PaxDb" id="9913-ENSBTAP00000037293"/>
<dbReference type="GeneID" id="518366"/>
<dbReference type="KEGG" id="bta:518366"/>
<dbReference type="CTD" id="92017"/>
<dbReference type="eggNOG" id="KOG2101">
    <property type="taxonomic scope" value="Eukaryota"/>
</dbReference>
<dbReference type="eggNOG" id="KOG4381">
    <property type="taxonomic scope" value="Eukaryota"/>
</dbReference>
<dbReference type="InParanoid" id="Q08DX0"/>
<dbReference type="OrthoDB" id="428895at2759"/>
<dbReference type="Proteomes" id="UP000009136">
    <property type="component" value="Unplaced"/>
</dbReference>
<dbReference type="GO" id="GO:0035091">
    <property type="term" value="F:phosphatidylinositol binding"/>
    <property type="evidence" value="ECO:0007669"/>
    <property type="project" value="InterPro"/>
</dbReference>
<dbReference type="CDD" id="cd07277">
    <property type="entry name" value="PX_RUN"/>
    <property type="match status" value="1"/>
</dbReference>
<dbReference type="CDD" id="cd17689">
    <property type="entry name" value="RUN_SNX29"/>
    <property type="match status" value="1"/>
</dbReference>
<dbReference type="Gene3D" id="1.20.58.900">
    <property type="match status" value="1"/>
</dbReference>
<dbReference type="Gene3D" id="3.30.1520.10">
    <property type="entry name" value="Phox-like domain"/>
    <property type="match status" value="1"/>
</dbReference>
<dbReference type="InterPro" id="IPR001683">
    <property type="entry name" value="PX_dom"/>
</dbReference>
<dbReference type="InterPro" id="IPR036871">
    <property type="entry name" value="PX_dom_sf"/>
</dbReference>
<dbReference type="InterPro" id="IPR004012">
    <property type="entry name" value="Run_dom"/>
</dbReference>
<dbReference type="InterPro" id="IPR037213">
    <property type="entry name" value="Run_dom_sf"/>
</dbReference>
<dbReference type="InterPro" id="IPR047329">
    <property type="entry name" value="RUN_SNX29"/>
</dbReference>
<dbReference type="InterPro" id="IPR037916">
    <property type="entry name" value="SNX29_PX"/>
</dbReference>
<dbReference type="PANTHER" id="PTHR47194:SF4">
    <property type="entry name" value="SORTING NEXIN-29"/>
    <property type="match status" value="1"/>
</dbReference>
<dbReference type="PANTHER" id="PTHR47194">
    <property type="entry name" value="SORTING NEXIN-29-RELATED"/>
    <property type="match status" value="1"/>
</dbReference>
<dbReference type="Pfam" id="PF00787">
    <property type="entry name" value="PX"/>
    <property type="match status" value="1"/>
</dbReference>
<dbReference type="Pfam" id="PF02759">
    <property type="entry name" value="RUN"/>
    <property type="match status" value="1"/>
</dbReference>
<dbReference type="SMART" id="SM00312">
    <property type="entry name" value="PX"/>
    <property type="match status" value="1"/>
</dbReference>
<dbReference type="SMART" id="SM00593">
    <property type="entry name" value="RUN"/>
    <property type="match status" value="1"/>
</dbReference>
<dbReference type="SUPFAM" id="SSF64268">
    <property type="entry name" value="PX domain"/>
    <property type="match status" value="1"/>
</dbReference>
<dbReference type="SUPFAM" id="SSF140741">
    <property type="entry name" value="RUN domain-like"/>
    <property type="match status" value="1"/>
</dbReference>
<dbReference type="PROSITE" id="PS50195">
    <property type="entry name" value="PX"/>
    <property type="match status" value="1"/>
</dbReference>
<dbReference type="PROSITE" id="PS50826">
    <property type="entry name" value="RUN"/>
    <property type="match status" value="1"/>
</dbReference>
<organism>
    <name type="scientific">Bos taurus</name>
    <name type="common">Bovine</name>
    <dbReference type="NCBI Taxonomy" id="9913"/>
    <lineage>
        <taxon>Eukaryota</taxon>
        <taxon>Metazoa</taxon>
        <taxon>Chordata</taxon>
        <taxon>Craniata</taxon>
        <taxon>Vertebrata</taxon>
        <taxon>Euteleostomi</taxon>
        <taxon>Mammalia</taxon>
        <taxon>Eutheria</taxon>
        <taxon>Laurasiatheria</taxon>
        <taxon>Artiodactyla</taxon>
        <taxon>Ruminantia</taxon>
        <taxon>Pecora</taxon>
        <taxon>Bovidae</taxon>
        <taxon>Bovinae</taxon>
        <taxon>Bos</taxon>
    </lineage>
</organism>
<sequence length="817" mass="91337">MSGTQNNDMKRQFLLERLLDAVKQCQIRFGGRKEIASDSDSRVTCLCAQFEAVLQHGLKRSRGLALTAAAIKQAAGFASKTETEPVFWFYVKEVLSKHELQRFHALRHIASDVGRGRAWLRCALNENSLERYLHMLLADRGRLSTFYEDWAFVMDEERSSMLPTMAAGLNSILFAINIDNKDLNGQSKFAPTVSDLLKESTQNVTSLLKESTQGVSSLFREITASSAVSILSRAEQETDPLPVVSKHVSADAKCKRERKKKKKVTNIISFDDEEDEQSSGDVFKKIPGAGESSEENSDRSSINIMSAFESPFGPNSNGSQGSNSWKIDSLSLNGEFGYQKLDVKSIDDEDADENEDDVCGSMPGRKRPGHSESPEKPLDAGTCLSQMHGWAPLQVLHGHAEVLFPVSGVGSYGPADAPLGSLENGTGPEDHILPEPGPRYSVEASPPGQESPLSSLLPSASVPESMTVSDLRQAIVAMMNRKDELEEENRSLRNLLDGEMEHSAALRQEVDTLKRKVAEQEERHVTKVQALARENEVLKVQLKKYVGAVQMLKREGQTAEVVPNLWNIDGEVTVPEQKPGEVAEELTSSYERKLIEVAEMHGELIEFNERLHRALVAKEALVSQMRQELIDLRGPVPGDLSQTSEDQSLSDFEISNRALINVWIPSVFLRGKAANAFHVYQVYIRIKDDEWNVYRRYAEFRTLHHKLQNKYPQVRAFNFPPKKAIGNKDAKFVEERRKQLQTYLRSVMNKVIQAVPEFTASPQKETLTQLMPFFVDITPPGDALTKNSRPKVASRFPKLARGHPRETRNVEPQSGDL</sequence>
<gene>
    <name type="primary">SNX29</name>
</gene>
<reference key="1">
    <citation type="submission" date="2006-09" db="EMBL/GenBank/DDBJ databases">
        <authorList>
            <consortium name="NIH - Mammalian Gene Collection (MGC) project"/>
        </authorList>
    </citation>
    <scope>NUCLEOTIDE SEQUENCE [LARGE SCALE MRNA]</scope>
    <source>
        <strain>Hereford</strain>
        <tissue>Fetal pons</tissue>
    </source>
</reference>
<accession>Q08DX0</accession>